<comment type="function">
    <text evidence="7 8 9 11">Cleaves proteins C-terminally to mono- and paired-basic residues. Involved in the shedding of a subset of GPI-anchored plasma membrane proteins from the cell surface, including itself, GAS1 and MSB2. May also play a role in the maturation of GPI-mannoproteins associated with the cell wall. Can process the alpha-mating factor precursor. Required for cell wall integrity.</text>
</comment>
<comment type="catalytic activity">
    <reaction>
        <text>Hydrolyzes various precursor proteins with Arg or Lys in P1, and commonly Arg or Lys also in P2. The P3 amino acid is usually non-polar, but otherwise additional basic amino acids are favorable in both non-prime and prime positions.</text>
        <dbReference type="EC" id="3.4.23.41"/>
    </reaction>
</comment>
<comment type="biophysicochemical properties">
    <phDependence>
        <text evidence="11">Optimum pH is 4.0.</text>
    </phDependence>
</comment>
<comment type="subunit">
    <text>Consists of an alpha and a beta subunit, which are maintained together by a disulfide bond.</text>
</comment>
<comment type="subcellular location">
    <subcellularLocation>
        <location evidence="4 6 10 11">Cell membrane</location>
        <topology evidence="4 6 10 11">Lipid-anchor</topology>
        <topology evidence="4 6 10 11">GPI-anchor</topology>
    </subcellularLocation>
    <text>GPI-anchored plasma membrane protein (GPI-PMP), peripherally distributed over the entire cell surface.</text>
</comment>
<comment type="induction">
    <text evidence="7">Positively regulated by cell integrity signaling through MPK1 in response to cell wall perturbation.</text>
</comment>
<comment type="PTM">
    <text evidence="8 11">The zymogen is transported to the periplasm, where the propeptide is removed and the enzyme is further subjected to an internal, autocatalytic cleavage to generate an alpha/beta two-subunit endopeptidase. The proteolytic processing at the cell surface is regulated by the environmental pH.</text>
</comment>
<comment type="PTM">
    <text evidence="10 11">Extensively N-glycosylated.</text>
</comment>
<comment type="miscellaneous">
    <text evidence="5">Present with 5000 molecules/cell in log phase SD medium.</text>
</comment>
<comment type="similarity">
    <text evidence="12">Belongs to the peptidase A1 family.</text>
</comment>
<feature type="signal peptide" evidence="1">
    <location>
        <begin position="1"/>
        <end position="21"/>
    </location>
</feature>
<feature type="propeptide" id="PRO_0000025838" evidence="11">
    <location>
        <begin position="22"/>
        <end position="67"/>
    </location>
</feature>
<feature type="chain" id="PRO_0000025839" description="Aspartic proteinase 3">
    <location>
        <begin position="68"/>
        <end position="548"/>
    </location>
</feature>
<feature type="chain" id="PRO_0000372455" description="Aspartic proteinase 3 subunit alpha">
    <location>
        <begin position="68"/>
        <end position="128"/>
    </location>
</feature>
<feature type="chain" id="PRO_0000372456" description="Aspartic proteinase 3 subunit beta">
    <location>
        <begin position="145"/>
        <end position="548"/>
    </location>
</feature>
<feature type="propeptide" id="PRO_0000025840" description="Removed in mature form" evidence="1">
    <location>
        <begin position="549"/>
        <end position="569"/>
    </location>
</feature>
<feature type="domain" description="Peptidase A1" evidence="2">
    <location>
        <begin position="83"/>
        <end position="475"/>
    </location>
</feature>
<feature type="active site" evidence="3">
    <location>
        <position position="101"/>
    </location>
</feature>
<feature type="active site" evidence="3">
    <location>
        <position position="371"/>
    </location>
</feature>
<feature type="site" description="Cleavage; by autolysis" evidence="12">
    <location>
        <begin position="128"/>
        <end position="129"/>
    </location>
</feature>
<feature type="site" description="Cleavage; by autolysis">
    <location>
        <begin position="144"/>
        <end position="145"/>
    </location>
</feature>
<feature type="lipid moiety-binding region" description="GPI-anchor amidated asparagine" evidence="1">
    <location>
        <position position="548"/>
    </location>
</feature>
<feature type="glycosylation site" description="N-linked (GlcNAc...) asparagine" evidence="1">
    <location>
        <position position="95"/>
    </location>
</feature>
<feature type="glycosylation site" description="N-linked (GlcNAc...) asparagine" evidence="1">
    <location>
        <position position="203"/>
    </location>
</feature>
<feature type="glycosylation site" description="N-linked (GlcNAc...) asparagine" evidence="1">
    <location>
        <position position="232"/>
    </location>
</feature>
<feature type="glycosylation site" description="N-linked (GlcNAc...) asparagine" evidence="1">
    <location>
        <position position="242"/>
    </location>
</feature>
<feature type="glycosylation site" description="N-linked (GlcNAc...) asparagine" evidence="1">
    <location>
        <position position="245"/>
    </location>
</feature>
<feature type="glycosylation site" description="N-linked (GlcNAc...) asparagine" evidence="1">
    <location>
        <position position="299"/>
    </location>
</feature>
<feature type="glycosylation site" description="N-linked (GlcNAc...) asparagine" evidence="1">
    <location>
        <position position="358"/>
    </location>
</feature>
<feature type="glycosylation site" description="N-linked (GlcNAc...) asparagine" evidence="1">
    <location>
        <position position="480"/>
    </location>
</feature>
<feature type="glycosylation site" description="N-linked (GlcNAc...) asparagine" evidence="1">
    <location>
        <position position="522"/>
    </location>
</feature>
<feature type="glycosylation site" description="N-linked (GlcNAc...) asparagine" evidence="1">
    <location>
        <position position="532"/>
    </location>
</feature>
<feature type="mutagenesis site" description="Loss of function." evidence="11">
    <original>D</original>
    <variation>A</variation>
    <variation>E</variation>
    <location>
        <position position="101"/>
    </location>
</feature>
<feature type="sequence conflict" description="In Ref. 1; AAA19107." evidence="12" ref="1">
    <original>L</original>
    <variation>S</variation>
    <location>
        <position position="370"/>
    </location>
</feature>
<name>YPS1_YEAST</name>
<sequence>MKLKTVRSAVLSSLFASQVLGKIIPAANKRDDDSNSKFVKLPFHKLYGDSLENVGSDKKPEVRLLKRADGYEEIIITNQQSFYSVDLEVGTPPQNVTVLVDTGSSDLWIMGSDNPYCSSNSMGSSRRRVIDKRDDSSSGGSLINDINPFGWLTGTGSAIGPTATGLGGGSGTATQSVPASEATMDCQQYGTFSTSGSSTFRSNNTYFSISYGDGTFASGTFGTDVLDLSDLNVTGLSFAVANETNSTMGVLGIGLPELEVTYSGSTASHSGKAYKYDNFPIVLKNSGAIKSNTYSLYLNDSDAMHGTILFGAVDHSKYTGTLYTIPIVNTLSASGFSSPIQFDVTINGIGISDSGSSNKTLTTTKIPALLDSGTTLTYLPQTVVSMIATELGAQYSSRIGYYVLDCPSDDSMEIVFDFGGFHINAPLSSFILSTGTTCLLGIIPTSDDTGTILGDSFLTNAYVVYDLENLEISMAQARYNTTSENIEIITSSVPSAVKAPGYTNTWSTSASIVTGGNIFTVNSSQTASFSGNLTTSTASATSTSSKRNVGDHIVPSLPLTLISLLFAFI</sequence>
<proteinExistence type="evidence at protein level"/>
<protein>
    <recommendedName>
        <fullName>Aspartic proteinase 3</fullName>
        <ecNumber>3.4.23.41</ecNumber>
    </recommendedName>
    <alternativeName>
        <fullName>Proprotein convertase</fullName>
    </alternativeName>
    <alternativeName>
        <fullName>Yapsin-1</fullName>
    </alternativeName>
    <component>
        <recommendedName>
            <fullName>Aspartic proteinase 3 subunit alpha</fullName>
        </recommendedName>
    </component>
    <component>
        <recommendedName>
            <fullName>Aspartic proteinase 3 subunit beta</fullName>
        </recommendedName>
    </component>
</protein>
<accession>P32329</accession>
<accession>D6VYB8</accession>
<accession>Q12419</accession>
<keyword id="KW-0064">Aspartyl protease</keyword>
<keyword id="KW-0068">Autocatalytic cleavage</keyword>
<keyword id="KW-1003">Cell membrane</keyword>
<keyword id="KW-0165">Cleavage on pair of basic residues</keyword>
<keyword id="KW-0903">Direct protein sequencing</keyword>
<keyword id="KW-1015">Disulfide bond</keyword>
<keyword id="KW-0325">Glycoprotein</keyword>
<keyword id="KW-0336">GPI-anchor</keyword>
<keyword id="KW-0378">Hydrolase</keyword>
<keyword id="KW-0449">Lipoprotein</keyword>
<keyword id="KW-0472">Membrane</keyword>
<keyword id="KW-0645">Protease</keyword>
<keyword id="KW-1185">Reference proteome</keyword>
<keyword id="KW-0732">Signal</keyword>
<keyword id="KW-0865">Zymogen</keyword>
<dbReference type="EC" id="3.4.23.41"/>
<dbReference type="EMBL" id="L31651">
    <property type="protein sequence ID" value="AAA19107.1"/>
    <property type="molecule type" value="Unassigned_DNA"/>
</dbReference>
<dbReference type="EMBL" id="X89514">
    <property type="protein sequence ID" value="CAA61699.1"/>
    <property type="molecule type" value="Genomic_DNA"/>
</dbReference>
<dbReference type="EMBL" id="Z73292">
    <property type="protein sequence ID" value="CAA97688.1"/>
    <property type="molecule type" value="Genomic_DNA"/>
</dbReference>
<dbReference type="EMBL" id="U53877">
    <property type="protein sequence ID" value="AAB82367.1"/>
    <property type="molecule type" value="Genomic_DNA"/>
</dbReference>
<dbReference type="EMBL" id="BK006945">
    <property type="protein sequence ID" value="DAA09434.1"/>
    <property type="molecule type" value="Genomic_DNA"/>
</dbReference>
<dbReference type="PIR" id="S64957">
    <property type="entry name" value="S64957"/>
</dbReference>
<dbReference type="RefSeq" id="NP_013221.1">
    <property type="nucleotide sequence ID" value="NM_001182007.1"/>
</dbReference>
<dbReference type="SMR" id="P32329"/>
<dbReference type="BioGRID" id="31392">
    <property type="interactions" value="120"/>
</dbReference>
<dbReference type="DIP" id="DIP-2565N"/>
<dbReference type="FunCoup" id="P32329">
    <property type="interactions" value="540"/>
</dbReference>
<dbReference type="IntAct" id="P32329">
    <property type="interactions" value="2"/>
</dbReference>
<dbReference type="MINT" id="P32329"/>
<dbReference type="STRING" id="4932.YLR120C"/>
<dbReference type="MEROPS" id="A01.030"/>
<dbReference type="GlyCosmos" id="P32329">
    <property type="glycosylation" value="10 sites, No reported glycans"/>
</dbReference>
<dbReference type="GlyGen" id="P32329">
    <property type="glycosylation" value="11 sites"/>
</dbReference>
<dbReference type="PaxDb" id="4932-YLR120C"/>
<dbReference type="PeptideAtlas" id="P32329"/>
<dbReference type="EnsemblFungi" id="YLR120C_mRNA">
    <property type="protein sequence ID" value="YLR120C"/>
    <property type="gene ID" value="YLR120C"/>
</dbReference>
<dbReference type="GeneID" id="850811"/>
<dbReference type="KEGG" id="sce:YLR120C"/>
<dbReference type="AGR" id="SGD:S000004110"/>
<dbReference type="SGD" id="S000004110">
    <property type="gene designation" value="YPS1"/>
</dbReference>
<dbReference type="VEuPathDB" id="FungiDB:YLR120C"/>
<dbReference type="eggNOG" id="KOG1339">
    <property type="taxonomic scope" value="Eukaryota"/>
</dbReference>
<dbReference type="GeneTree" id="ENSGT00940000166661"/>
<dbReference type="HOGENOM" id="CLU_013253_9_1_1"/>
<dbReference type="InParanoid" id="P32329"/>
<dbReference type="OMA" id="CNVTLGT"/>
<dbReference type="OrthoDB" id="771136at2759"/>
<dbReference type="BioCyc" id="YEAST:G3O-32265-MONOMER"/>
<dbReference type="BRENDA" id="3.4.23.41">
    <property type="organism ID" value="984"/>
</dbReference>
<dbReference type="SABIO-RK" id="P32329"/>
<dbReference type="BioGRID-ORCS" id="850811">
    <property type="hits" value="2 hits in 10 CRISPR screens"/>
</dbReference>
<dbReference type="PRO" id="PR:P32329"/>
<dbReference type="Proteomes" id="UP000002311">
    <property type="component" value="Chromosome XII"/>
</dbReference>
<dbReference type="RNAct" id="P32329">
    <property type="molecule type" value="protein"/>
</dbReference>
<dbReference type="GO" id="GO:0005576">
    <property type="term" value="C:extracellular region"/>
    <property type="evidence" value="ECO:0000318"/>
    <property type="project" value="GO_Central"/>
</dbReference>
<dbReference type="GO" id="GO:0009277">
    <property type="term" value="C:fungal-type cell wall"/>
    <property type="evidence" value="ECO:0000318"/>
    <property type="project" value="GO_Central"/>
</dbReference>
<dbReference type="GO" id="GO:0005886">
    <property type="term" value="C:plasma membrane"/>
    <property type="evidence" value="ECO:0000314"/>
    <property type="project" value="SGD"/>
</dbReference>
<dbReference type="GO" id="GO:0098552">
    <property type="term" value="C:side of membrane"/>
    <property type="evidence" value="ECO:0007669"/>
    <property type="project" value="UniProtKB-KW"/>
</dbReference>
<dbReference type="GO" id="GO:0004190">
    <property type="term" value="F:aspartic-type endopeptidase activity"/>
    <property type="evidence" value="ECO:0000314"/>
    <property type="project" value="SGD"/>
</dbReference>
<dbReference type="GO" id="GO:0031505">
    <property type="term" value="P:fungal-type cell wall organization"/>
    <property type="evidence" value="ECO:0000316"/>
    <property type="project" value="SGD"/>
</dbReference>
<dbReference type="GO" id="GO:0071432">
    <property type="term" value="P:peptide mating pheromone maturation involved in positive regulation of conjugation with cellular fusion"/>
    <property type="evidence" value="ECO:0000316"/>
    <property type="project" value="SGD"/>
</dbReference>
<dbReference type="GO" id="GO:0016485">
    <property type="term" value="P:protein processing"/>
    <property type="evidence" value="ECO:0000315"/>
    <property type="project" value="SGD"/>
</dbReference>
<dbReference type="GO" id="GO:0001402">
    <property type="term" value="P:signal transduction involved in filamentous growth"/>
    <property type="evidence" value="ECO:0000315"/>
    <property type="project" value="SGD"/>
</dbReference>
<dbReference type="CDD" id="cd05474">
    <property type="entry name" value="SAP_like"/>
    <property type="match status" value="1"/>
</dbReference>
<dbReference type="FunFam" id="2.40.70.10:FF:000023">
    <property type="entry name" value="Aspartic protease"/>
    <property type="match status" value="1"/>
</dbReference>
<dbReference type="Gene3D" id="2.40.70.10">
    <property type="entry name" value="Acid Proteases"/>
    <property type="match status" value="2"/>
</dbReference>
<dbReference type="InterPro" id="IPR001461">
    <property type="entry name" value="Aspartic_peptidase_A1"/>
</dbReference>
<dbReference type="InterPro" id="IPR001969">
    <property type="entry name" value="Aspartic_peptidase_AS"/>
</dbReference>
<dbReference type="InterPro" id="IPR033121">
    <property type="entry name" value="PEPTIDASE_A1"/>
</dbReference>
<dbReference type="InterPro" id="IPR021109">
    <property type="entry name" value="Peptidase_aspartic_dom_sf"/>
</dbReference>
<dbReference type="InterPro" id="IPR033876">
    <property type="entry name" value="SAP-like"/>
</dbReference>
<dbReference type="PANTHER" id="PTHR47966:SF65">
    <property type="entry name" value="ASPARTIC-TYPE ENDOPEPTIDASE"/>
    <property type="match status" value="1"/>
</dbReference>
<dbReference type="PANTHER" id="PTHR47966">
    <property type="entry name" value="BETA-SITE APP-CLEAVING ENZYME, ISOFORM A-RELATED"/>
    <property type="match status" value="1"/>
</dbReference>
<dbReference type="Pfam" id="PF00026">
    <property type="entry name" value="Asp"/>
    <property type="match status" value="1"/>
</dbReference>
<dbReference type="PRINTS" id="PR00792">
    <property type="entry name" value="PEPSIN"/>
</dbReference>
<dbReference type="SUPFAM" id="SSF50630">
    <property type="entry name" value="Acid proteases"/>
    <property type="match status" value="1"/>
</dbReference>
<dbReference type="PROSITE" id="PS00141">
    <property type="entry name" value="ASP_PROTEASE"/>
    <property type="match status" value="2"/>
</dbReference>
<dbReference type="PROSITE" id="PS51767">
    <property type="entry name" value="PEPTIDASE_A1"/>
    <property type="match status" value="1"/>
</dbReference>
<organism>
    <name type="scientific">Saccharomyces cerevisiae (strain ATCC 204508 / S288c)</name>
    <name type="common">Baker's yeast</name>
    <dbReference type="NCBI Taxonomy" id="559292"/>
    <lineage>
        <taxon>Eukaryota</taxon>
        <taxon>Fungi</taxon>
        <taxon>Dikarya</taxon>
        <taxon>Ascomycota</taxon>
        <taxon>Saccharomycotina</taxon>
        <taxon>Saccharomycetes</taxon>
        <taxon>Saccharomycetales</taxon>
        <taxon>Saccharomycetaceae</taxon>
        <taxon>Saccharomyces</taxon>
    </lineage>
</organism>
<evidence type="ECO:0000255" key="1"/>
<evidence type="ECO:0000255" key="2">
    <source>
        <dbReference type="PROSITE-ProRule" id="PRU01103"/>
    </source>
</evidence>
<evidence type="ECO:0000255" key="3">
    <source>
        <dbReference type="PROSITE-ProRule" id="PRU10094"/>
    </source>
</evidence>
<evidence type="ECO:0000269" key="4">
    <source>
    </source>
</evidence>
<evidence type="ECO:0000269" key="5">
    <source>
    </source>
</evidence>
<evidence type="ECO:0000269" key="6">
    <source>
    </source>
</evidence>
<evidence type="ECO:0000269" key="7">
    <source>
    </source>
</evidence>
<evidence type="ECO:0000269" key="8">
    <source>
    </source>
</evidence>
<evidence type="ECO:0000269" key="9">
    <source>
    </source>
</evidence>
<evidence type="ECO:0000269" key="10">
    <source>
    </source>
</evidence>
<evidence type="ECO:0000269" key="11">
    <source>
    </source>
</evidence>
<evidence type="ECO:0000305" key="12"/>
<reference key="1">
    <citation type="journal article" date="1990" name="Yeast">
        <title>A novel aspartyl protease allowing KEX2-independent MF alpha propheromone processing in yeast.</title>
        <authorList>
            <person name="Egel-Mitani M."/>
            <person name="Flygenring H.P."/>
            <person name="Hansen M.T."/>
        </authorList>
    </citation>
    <scope>NUCLEOTIDE SEQUENCE</scope>
    <source>
        <strain>ME768</strain>
    </source>
</reference>
<reference key="2">
    <citation type="journal article" date="1997" name="Yeast">
        <title>Sequence analysis of a 37.6 kbp cosmid clone from the right arm of Saccharomyces cerevisiae chromosome XII, carrying YAP3, HOG1, SNR6, tRNA-Arg3 and 23 new open reading frames, among which several homologies to proteins involved in cell division control and to mammalian growth factors and other animal proteins are found.</title>
        <authorList>
            <person name="Verhasselt P."/>
            <person name="Volckaert G."/>
        </authorList>
    </citation>
    <scope>NUCLEOTIDE SEQUENCE [GENOMIC DNA]</scope>
    <source>
        <strain>ATCC 90840 / EAY235 / FY23</strain>
    </source>
</reference>
<reference key="3">
    <citation type="journal article" date="1997" name="Nature">
        <title>The nucleotide sequence of Saccharomyces cerevisiae chromosome XII.</title>
        <authorList>
            <person name="Johnston M."/>
            <person name="Hillier L.W."/>
            <person name="Riles L."/>
            <person name="Albermann K."/>
            <person name="Andre B."/>
            <person name="Ansorge W."/>
            <person name="Benes V."/>
            <person name="Brueckner M."/>
            <person name="Delius H."/>
            <person name="Dubois E."/>
            <person name="Duesterhoeft A."/>
            <person name="Entian K.-D."/>
            <person name="Floeth M."/>
            <person name="Goffeau A."/>
            <person name="Hebling U."/>
            <person name="Heumann K."/>
            <person name="Heuss-Neitzel D."/>
            <person name="Hilbert H."/>
            <person name="Hilger F."/>
            <person name="Kleine K."/>
            <person name="Koetter P."/>
            <person name="Louis E.J."/>
            <person name="Messenguy F."/>
            <person name="Mewes H.-W."/>
            <person name="Miosga T."/>
            <person name="Moestl D."/>
            <person name="Mueller-Auer S."/>
            <person name="Nentwich U."/>
            <person name="Obermaier B."/>
            <person name="Piravandi E."/>
            <person name="Pohl T.M."/>
            <person name="Portetelle D."/>
            <person name="Purnelle B."/>
            <person name="Rechmann S."/>
            <person name="Rieger M."/>
            <person name="Rinke M."/>
            <person name="Rose M."/>
            <person name="Scharfe M."/>
            <person name="Scherens B."/>
            <person name="Scholler P."/>
            <person name="Schwager C."/>
            <person name="Schwarz S."/>
            <person name="Underwood A.P."/>
            <person name="Urrestarazu L.A."/>
            <person name="Vandenbol M."/>
            <person name="Verhasselt P."/>
            <person name="Vierendeels F."/>
            <person name="Voet M."/>
            <person name="Volckaert G."/>
            <person name="Voss H."/>
            <person name="Wambutt R."/>
            <person name="Wedler E."/>
            <person name="Wedler H."/>
            <person name="Zimmermann F.K."/>
            <person name="Zollner A."/>
            <person name="Hani J."/>
            <person name="Hoheisel J.D."/>
        </authorList>
    </citation>
    <scope>NUCLEOTIDE SEQUENCE [LARGE SCALE GENOMIC DNA]</scope>
    <source>
        <strain>ATCC 204508 / S288c</strain>
    </source>
</reference>
<reference key="4">
    <citation type="journal article" date="2014" name="G3 (Bethesda)">
        <title>The reference genome sequence of Saccharomyces cerevisiae: Then and now.</title>
        <authorList>
            <person name="Engel S.R."/>
            <person name="Dietrich F.S."/>
            <person name="Fisk D.G."/>
            <person name="Binkley G."/>
            <person name="Balakrishnan R."/>
            <person name="Costanzo M.C."/>
            <person name="Dwight S.S."/>
            <person name="Hitz B.C."/>
            <person name="Karra K."/>
            <person name="Nash R.S."/>
            <person name="Weng S."/>
            <person name="Wong E.D."/>
            <person name="Lloyd P."/>
            <person name="Skrzypek M.S."/>
            <person name="Miyasato S.R."/>
            <person name="Simison M."/>
            <person name="Cherry J.M."/>
        </authorList>
    </citation>
    <scope>GENOME REANNOTATION</scope>
    <source>
        <strain>ATCC 204508 / S288c</strain>
    </source>
</reference>
<reference key="5">
    <citation type="journal article" date="1993" name="J. Biol. Chem.">
        <title>Purification and characterization of a paired basic residue-specific yeast aspartic protease encoded by the YAP3 gene. Similarity to the mammalian pro-opiomelanocortin-converting enzyme.</title>
        <authorList>
            <person name="Azaryan A.V."/>
            <person name="Wong M."/>
            <person name="Friedman T.C."/>
            <person name="Cawley N.X."/>
            <person name="Estivariz F.E."/>
            <person name="Chen H.C."/>
            <person name="Loh Y.P."/>
        </authorList>
    </citation>
    <scope>CHARACTERIZATION</scope>
</reference>
<reference key="6">
    <citation type="journal article" date="1995" name="Biochemistry">
        <title>Secretion of yeast aspartic protease 3 is regulated by its carboxy-terminal tail: characterization of secreted YAP3p.</title>
        <authorList>
            <person name="Cawley N.X."/>
            <person name="Wong M."/>
            <person name="Pu L.-P."/>
            <person name="Tam W."/>
            <person name="Loh Y.P."/>
        </authorList>
    </citation>
    <scope>GPI-ANCHOR</scope>
</reference>
<reference key="7">
    <citation type="journal article" date="1995" name="J. Biol. Chem.">
        <title>The yeast proprotein convertase encoded by YAP3 is a glycophosphatidylinositol-anchored protein that localizes to the plasma membrane.</title>
        <authorList>
            <person name="Ash J."/>
            <person name="Dominguez M."/>
            <person name="Bergeron J.J.M."/>
            <person name="Thomas D.Y."/>
            <person name="Bourbonnais Y."/>
        </authorList>
    </citation>
    <scope>SUBCELLULAR LOCATION</scope>
    <scope>GLYCOSYLATION</scope>
</reference>
<reference key="8">
    <citation type="journal article" date="1998" name="J. Biol. Chem.">
        <title>Activation and processing of non-anchored yapsin 1 (Yap3p).</title>
        <authorList>
            <person name="Cawley N.X."/>
            <person name="Olsen V."/>
            <person name="Zhang C.F."/>
            <person name="Chen H.C."/>
            <person name="Tan M."/>
            <person name="Loh Y.P."/>
        </authorList>
    </citation>
    <scope>PROTEIN SEQUENCE OF 68-82 AND 145-159</scope>
    <scope>FUNCTION</scope>
    <scope>SUBCELLULAR LOCATION</scope>
    <scope>PROTEOLYTIC PROCESSING</scope>
    <scope>MUTAGENESIS OF ASP-101</scope>
    <scope>GLYCOSYLATION</scope>
    <scope>BIOPHYSICOCHEMICAL PROPERTIES</scope>
    <scope>DISULFIDE BOND</scope>
</reference>
<reference key="9">
    <citation type="journal article" date="2001" name="Traffic">
        <title>Proteolytic function of GPI-anchored plasma membrane protease Yps1p in the yeast vacuole and Golgi.</title>
        <authorList>
            <person name="Sievi E."/>
            <person name="Suntio T."/>
            <person name="Makarow M."/>
        </authorList>
    </citation>
    <scope>SUBCELLULAR LOCATION</scope>
</reference>
<reference key="10">
    <citation type="journal article" date="2003" name="Mol. Microbiol.">
        <title>The omega-site sequence of glycosylphosphatidylinositol-anchored proteins in Saccharomyces cerevisiae can determine distribution between the membrane and the cell wall.</title>
        <authorList>
            <person name="Frieman M.B."/>
            <person name="Cormack B.P."/>
        </authorList>
    </citation>
    <scope>SUBCELLULAR LOCATION</scope>
</reference>
<reference key="11">
    <citation type="journal article" date="2003" name="Nature">
        <title>Global analysis of protein expression in yeast.</title>
        <authorList>
            <person name="Ghaemmaghami S."/>
            <person name="Huh W.-K."/>
            <person name="Bower K."/>
            <person name="Howson R.W."/>
            <person name="Belle A."/>
            <person name="Dephoure N."/>
            <person name="O'Shea E.K."/>
            <person name="Weissman J.S."/>
        </authorList>
    </citation>
    <scope>LEVEL OF PROTEIN EXPRESSION [LARGE SCALE ANALYSIS]</scope>
</reference>
<reference key="12">
    <citation type="journal article" date="2005" name="Eukaryot. Cell">
        <title>Yapsins are a family of aspartyl proteases required for cell wall integrity in Saccharomyces cerevisiae.</title>
        <authorList>
            <person name="Krysan D.J."/>
            <person name="Ting E.L."/>
            <person name="Abeijon C."/>
            <person name="Kroos L."/>
            <person name="Fuller R.S."/>
        </authorList>
    </citation>
    <scope>FUNCTION</scope>
    <scope>INDUCTION</scope>
</reference>
<reference key="13">
    <citation type="journal article" date="2008" name="J. Cell Biol.">
        <title>Cleavage of the signaling mucin Msb2 by the aspartyl protease Yps1 is required for MAPK activation in yeast.</title>
        <authorList>
            <person name="Vadaie N."/>
            <person name="Dionne H."/>
            <person name="Akajagbor D.S."/>
            <person name="Nickerson S.R."/>
            <person name="Krysan D.J."/>
            <person name="Cullen P.J."/>
        </authorList>
    </citation>
    <scope>FUNCTION</scope>
</reference>
<reference key="14">
    <citation type="journal article" date="2008" name="Mol. Microbiol.">
        <title>Activation mechanism, functional role and shedding of glycosylphosphatidylinositol-anchored Yps1p at the Saccharomyces cerevisiae cell surface.</title>
        <authorList>
            <person name="Gagnon-Arsenault I."/>
            <person name="Parise L."/>
            <person name="Tremblay J."/>
            <person name="Bourbonnais Y."/>
        </authorList>
    </citation>
    <scope>FUNCTION</scope>
    <scope>PROTEOLYTIC PROCESSING</scope>
</reference>
<reference key="15">
    <citation type="journal article" date="1998" name="Biochemistry">
        <title>Cleavage efficiency of the novel aspartic protease yapsin 1 (Yap3p) enhanced for substrates with arginine residues flanking the P1 site: correlation with electronegative active-site pockets predicted by molecular modeling.</title>
        <authorList>
            <person name="Olsen V."/>
            <person name="Guruprasad K."/>
            <person name="Cawley N.X."/>
            <person name="Chen H.C."/>
            <person name="Blundell T.L."/>
            <person name="Loh Y.P."/>
        </authorList>
    </citation>
    <scope>3D-STRUCTURE MODELING</scope>
</reference>
<gene>
    <name type="primary">YPS1</name>
    <name type="synonym">YAP3</name>
    <name type="ordered locus">YLR120C</name>
    <name type="ORF">L2961</name>
    <name type="ORF">L9233.9</name>
</gene>